<accession>B6I8V2</accession>
<gene>
    <name evidence="1" type="primary">clpS</name>
    <name type="ordered locus">ECSE_0939</name>
</gene>
<comment type="function">
    <text evidence="1">Involved in the modulation of the specificity of the ClpAP-mediated ATP-dependent protein degradation.</text>
</comment>
<comment type="subunit">
    <text evidence="1">Binds to the N-terminal domain of the chaperone ClpA.</text>
</comment>
<comment type="similarity">
    <text evidence="1">Belongs to the ClpS family.</text>
</comment>
<proteinExistence type="inferred from homology"/>
<feature type="chain" id="PRO_1000115457" description="ATP-dependent Clp protease adapter protein ClpS">
    <location>
        <begin position="1"/>
        <end position="106"/>
    </location>
</feature>
<evidence type="ECO:0000255" key="1">
    <source>
        <dbReference type="HAMAP-Rule" id="MF_00302"/>
    </source>
</evidence>
<protein>
    <recommendedName>
        <fullName evidence="1">ATP-dependent Clp protease adapter protein ClpS</fullName>
    </recommendedName>
</protein>
<name>CLPS_ECOSE</name>
<reference key="1">
    <citation type="journal article" date="2008" name="DNA Res.">
        <title>Complete genome sequence and comparative analysis of the wild-type commensal Escherichia coli strain SE11 isolated from a healthy adult.</title>
        <authorList>
            <person name="Oshima K."/>
            <person name="Toh H."/>
            <person name="Ogura Y."/>
            <person name="Sasamoto H."/>
            <person name="Morita H."/>
            <person name="Park S.-H."/>
            <person name="Ooka T."/>
            <person name="Iyoda S."/>
            <person name="Taylor T.D."/>
            <person name="Hayashi T."/>
            <person name="Itoh K."/>
            <person name="Hattori M."/>
        </authorList>
    </citation>
    <scope>NUCLEOTIDE SEQUENCE [LARGE SCALE GENOMIC DNA]</scope>
    <source>
        <strain>SE11</strain>
    </source>
</reference>
<dbReference type="EMBL" id="AP009240">
    <property type="protein sequence ID" value="BAG76463.1"/>
    <property type="molecule type" value="Genomic_DNA"/>
</dbReference>
<dbReference type="RefSeq" id="WP_000520781.1">
    <property type="nucleotide sequence ID" value="NC_011415.1"/>
</dbReference>
<dbReference type="SMR" id="B6I8V2"/>
<dbReference type="GeneID" id="86863397"/>
<dbReference type="KEGG" id="ecy:ECSE_0939"/>
<dbReference type="HOGENOM" id="CLU_134358_2_1_6"/>
<dbReference type="Proteomes" id="UP000008199">
    <property type="component" value="Chromosome"/>
</dbReference>
<dbReference type="GO" id="GO:0030163">
    <property type="term" value="P:protein catabolic process"/>
    <property type="evidence" value="ECO:0007669"/>
    <property type="project" value="InterPro"/>
</dbReference>
<dbReference type="GO" id="GO:0006508">
    <property type="term" value="P:proteolysis"/>
    <property type="evidence" value="ECO:0007669"/>
    <property type="project" value="UniProtKB-UniRule"/>
</dbReference>
<dbReference type="FunFam" id="3.30.1390.10:FF:000002">
    <property type="entry name" value="ATP-dependent Clp protease adapter protein ClpS"/>
    <property type="match status" value="1"/>
</dbReference>
<dbReference type="Gene3D" id="3.30.1390.10">
    <property type="match status" value="1"/>
</dbReference>
<dbReference type="HAMAP" id="MF_00302">
    <property type="entry name" value="ClpS"/>
    <property type="match status" value="1"/>
</dbReference>
<dbReference type="InterPro" id="IPR022935">
    <property type="entry name" value="ClpS"/>
</dbReference>
<dbReference type="InterPro" id="IPR003769">
    <property type="entry name" value="ClpS_core"/>
</dbReference>
<dbReference type="InterPro" id="IPR014719">
    <property type="entry name" value="Ribosomal_bL12_C/ClpS-like"/>
</dbReference>
<dbReference type="NCBIfam" id="NF000670">
    <property type="entry name" value="PRK00033.1-3"/>
    <property type="match status" value="1"/>
</dbReference>
<dbReference type="NCBIfam" id="NF000672">
    <property type="entry name" value="PRK00033.1-5"/>
    <property type="match status" value="1"/>
</dbReference>
<dbReference type="PANTHER" id="PTHR33473:SF19">
    <property type="entry name" value="ATP-DEPENDENT CLP PROTEASE ADAPTER PROTEIN CLPS"/>
    <property type="match status" value="1"/>
</dbReference>
<dbReference type="PANTHER" id="PTHR33473">
    <property type="entry name" value="ATP-DEPENDENT CLP PROTEASE ADAPTER PROTEIN CLPS1, CHLOROPLASTIC"/>
    <property type="match status" value="1"/>
</dbReference>
<dbReference type="Pfam" id="PF02617">
    <property type="entry name" value="ClpS"/>
    <property type="match status" value="1"/>
</dbReference>
<dbReference type="SUPFAM" id="SSF54736">
    <property type="entry name" value="ClpS-like"/>
    <property type="match status" value="1"/>
</dbReference>
<sequence>MGKTNDWLDFDQLAEEKVRDALKPPSMYKVILVNDDYTPMEFVIDVLQKFFSYDVERATQLMLAVHYQGKAICGVFTAEVAETKVAMVNKYARENEHPLLCTLEKA</sequence>
<organism>
    <name type="scientific">Escherichia coli (strain SE11)</name>
    <dbReference type="NCBI Taxonomy" id="409438"/>
    <lineage>
        <taxon>Bacteria</taxon>
        <taxon>Pseudomonadati</taxon>
        <taxon>Pseudomonadota</taxon>
        <taxon>Gammaproteobacteria</taxon>
        <taxon>Enterobacterales</taxon>
        <taxon>Enterobacteriaceae</taxon>
        <taxon>Escherichia</taxon>
    </lineage>
</organism>